<gene>
    <name type="ordered locus">M28_Spy0517</name>
</gene>
<protein>
    <recommendedName>
        <fullName evidence="1">Nucleotide-binding protein M28_Spy0517</fullName>
    </recommendedName>
</protein>
<name>Y517_STRPM</name>
<proteinExistence type="inferred from homology"/>
<sequence length="296" mass="33587">MSDKHINLVIVTGMSGAGKTVAIQSFEDLGYFTIDNMPPALVPKFLELIEQTNENRRVALVVDMRSRLFFKEINSTLDSIESNPSIDFRILFLDATDGELVSRYKETRRSHPLAADGRVLDGIRLERELLSPLKSMSQHVVDTTKLTPRQLRKTISDQFSEGSNQASFRIEVMSFGFKYGLPLDADLVFDVRFLPNPYYKVELREKTGLDEDVFNYVMSHPESEVFYKHLLNLIVPILPAYQKEGKSVLTVAIGCTGGQHRSVAFAHCLAESLATDWSVNESHRDQNRRKETVNRS</sequence>
<accession>Q48UH5</accession>
<reference key="1">
    <citation type="journal article" date="2005" name="J. Infect. Dis.">
        <title>Genome sequence of a serotype M28 strain of group A Streptococcus: potential new insights into puerperal sepsis and bacterial disease specificity.</title>
        <authorList>
            <person name="Green N.M."/>
            <person name="Zhang S."/>
            <person name="Porcella S.F."/>
            <person name="Nagiec M.J."/>
            <person name="Barbian K.D."/>
            <person name="Beres S.B."/>
            <person name="Lefebvre R.B."/>
            <person name="Musser J.M."/>
        </authorList>
    </citation>
    <scope>NUCLEOTIDE SEQUENCE [LARGE SCALE GENOMIC DNA]</scope>
    <source>
        <strain>MGAS6180</strain>
    </source>
</reference>
<organism>
    <name type="scientific">Streptococcus pyogenes serotype M28 (strain MGAS6180)</name>
    <dbReference type="NCBI Taxonomy" id="319701"/>
    <lineage>
        <taxon>Bacteria</taxon>
        <taxon>Bacillati</taxon>
        <taxon>Bacillota</taxon>
        <taxon>Bacilli</taxon>
        <taxon>Lactobacillales</taxon>
        <taxon>Streptococcaceae</taxon>
        <taxon>Streptococcus</taxon>
    </lineage>
</organism>
<dbReference type="EMBL" id="CP000056">
    <property type="protein sequence ID" value="AAX71631.1"/>
    <property type="molecule type" value="Genomic_DNA"/>
</dbReference>
<dbReference type="RefSeq" id="WP_011284641.1">
    <property type="nucleotide sequence ID" value="NC_007296.2"/>
</dbReference>
<dbReference type="SMR" id="Q48UH5"/>
<dbReference type="KEGG" id="spb:M28_Spy0517"/>
<dbReference type="HOGENOM" id="CLU_059558_0_0_9"/>
<dbReference type="GO" id="GO:0005524">
    <property type="term" value="F:ATP binding"/>
    <property type="evidence" value="ECO:0007669"/>
    <property type="project" value="UniProtKB-UniRule"/>
</dbReference>
<dbReference type="GO" id="GO:0005525">
    <property type="term" value="F:GTP binding"/>
    <property type="evidence" value="ECO:0007669"/>
    <property type="project" value="UniProtKB-UniRule"/>
</dbReference>
<dbReference type="Gene3D" id="3.40.50.300">
    <property type="entry name" value="P-loop containing nucleotide triphosphate hydrolases"/>
    <property type="match status" value="1"/>
</dbReference>
<dbReference type="HAMAP" id="MF_00636">
    <property type="entry name" value="RapZ_like"/>
    <property type="match status" value="1"/>
</dbReference>
<dbReference type="InterPro" id="IPR027417">
    <property type="entry name" value="P-loop_NTPase"/>
</dbReference>
<dbReference type="InterPro" id="IPR005337">
    <property type="entry name" value="RapZ-like"/>
</dbReference>
<dbReference type="InterPro" id="IPR053930">
    <property type="entry name" value="RapZ-like_N"/>
</dbReference>
<dbReference type="InterPro" id="IPR053931">
    <property type="entry name" value="RapZ_C"/>
</dbReference>
<dbReference type="NCBIfam" id="NF003828">
    <property type="entry name" value="PRK05416.1"/>
    <property type="match status" value="1"/>
</dbReference>
<dbReference type="PANTHER" id="PTHR30448">
    <property type="entry name" value="RNASE ADAPTER PROTEIN RAPZ"/>
    <property type="match status" value="1"/>
</dbReference>
<dbReference type="PANTHER" id="PTHR30448:SF0">
    <property type="entry name" value="RNASE ADAPTER PROTEIN RAPZ"/>
    <property type="match status" value="1"/>
</dbReference>
<dbReference type="Pfam" id="PF22740">
    <property type="entry name" value="PapZ_C"/>
    <property type="match status" value="1"/>
</dbReference>
<dbReference type="Pfam" id="PF03668">
    <property type="entry name" value="RapZ-like_N"/>
    <property type="match status" value="1"/>
</dbReference>
<dbReference type="PIRSF" id="PIRSF005052">
    <property type="entry name" value="P-loopkin"/>
    <property type="match status" value="1"/>
</dbReference>
<dbReference type="SUPFAM" id="SSF52540">
    <property type="entry name" value="P-loop containing nucleoside triphosphate hydrolases"/>
    <property type="match status" value="1"/>
</dbReference>
<evidence type="ECO:0000255" key="1">
    <source>
        <dbReference type="HAMAP-Rule" id="MF_00636"/>
    </source>
</evidence>
<comment type="function">
    <text evidence="1">Displays ATPase and GTPase activities.</text>
</comment>
<comment type="similarity">
    <text evidence="1">Belongs to the RapZ-like family.</text>
</comment>
<feature type="chain" id="PRO_0000259011" description="Nucleotide-binding protein M28_Spy0517">
    <location>
        <begin position="1"/>
        <end position="296"/>
    </location>
</feature>
<feature type="binding site" evidence="1">
    <location>
        <begin position="13"/>
        <end position="20"/>
    </location>
    <ligand>
        <name>ATP</name>
        <dbReference type="ChEBI" id="CHEBI:30616"/>
    </ligand>
</feature>
<feature type="binding site" evidence="1">
    <location>
        <begin position="63"/>
        <end position="66"/>
    </location>
    <ligand>
        <name>GTP</name>
        <dbReference type="ChEBI" id="CHEBI:37565"/>
    </ligand>
</feature>
<keyword id="KW-0067">ATP-binding</keyword>
<keyword id="KW-0342">GTP-binding</keyword>
<keyword id="KW-0547">Nucleotide-binding</keyword>